<comment type="subcellular location">
    <subcellularLocation>
        <location evidence="3">Membrane</location>
        <topology evidence="3">Single-pass membrane protein</topology>
    </subcellularLocation>
</comment>
<feature type="chain" id="PRO_0000416532" description="Rhodanese-like domain-containing protein 10">
    <location>
        <begin position="1"/>
        <end position="214"/>
    </location>
</feature>
<feature type="transmembrane region" description="Helical" evidence="1">
    <location>
        <begin position="190"/>
        <end position="206"/>
    </location>
</feature>
<feature type="domain" description="Rhodanese" evidence="2">
    <location>
        <begin position="58"/>
        <end position="182"/>
    </location>
</feature>
<feature type="active site" description="Cysteine persulfide intermediate" evidence="2">
    <location>
        <position position="142"/>
    </location>
</feature>
<feature type="sequence conflict" description="In Ref. 4; AAM64600." evidence="3" ref="4">
    <original>L</original>
    <variation>P</variation>
    <location>
        <position position="14"/>
    </location>
</feature>
<feature type="sequence conflict" description="In Ref. 4; AAM64600." evidence="3" ref="4">
    <original>QSYRLP</original>
    <variation>KPYRLT</variation>
    <location>
        <begin position="24"/>
        <end position="29"/>
    </location>
</feature>
<feature type="sequence conflict" description="In Ref. 4; AAM64600." evidence="3" ref="4">
    <original>NA</original>
    <variation>KT</variation>
    <location>
        <begin position="54"/>
        <end position="55"/>
    </location>
</feature>
<feature type="sequence conflict" description="In Ref. 4; AAM64600." evidence="3" ref="4">
    <original>I</original>
    <variation>M</variation>
    <location>
        <position position="63"/>
    </location>
</feature>
<dbReference type="EMBL" id="AC010871">
    <property type="protein sequence ID" value="AAF07833.1"/>
    <property type="molecule type" value="Genomic_DNA"/>
</dbReference>
<dbReference type="EMBL" id="CP002686">
    <property type="protein sequence ID" value="AEE74695.1"/>
    <property type="molecule type" value="Genomic_DNA"/>
</dbReference>
<dbReference type="EMBL" id="AY074549">
    <property type="protein sequence ID" value="AAL69515.1"/>
    <property type="molecule type" value="mRNA"/>
</dbReference>
<dbReference type="EMBL" id="BT002325">
    <property type="protein sequence ID" value="AAN86158.1"/>
    <property type="molecule type" value="mRNA"/>
</dbReference>
<dbReference type="EMBL" id="AY087039">
    <property type="protein sequence ID" value="AAM64600.1"/>
    <property type="molecule type" value="mRNA"/>
</dbReference>
<dbReference type="RefSeq" id="NP_566337.1">
    <property type="nucleotide sequence ID" value="NM_111726.5"/>
</dbReference>
<dbReference type="SMR" id="Q9SR92"/>
<dbReference type="FunCoup" id="Q9SR92">
    <property type="interactions" value="819"/>
</dbReference>
<dbReference type="STRING" id="3702.Q9SR92"/>
<dbReference type="PaxDb" id="3702-AT3G08920.1"/>
<dbReference type="ProteomicsDB" id="228270"/>
<dbReference type="EnsemblPlants" id="AT3G08920.1">
    <property type="protein sequence ID" value="AT3G08920.1"/>
    <property type="gene ID" value="AT3G08920"/>
</dbReference>
<dbReference type="GeneID" id="820041"/>
<dbReference type="Gramene" id="AT3G08920.1">
    <property type="protein sequence ID" value="AT3G08920.1"/>
    <property type="gene ID" value="AT3G08920"/>
</dbReference>
<dbReference type="KEGG" id="ath:AT3G08920"/>
<dbReference type="Araport" id="AT3G08920"/>
<dbReference type="TAIR" id="AT3G08920"/>
<dbReference type="eggNOG" id="ENOG502QPY7">
    <property type="taxonomic scope" value="Eukaryota"/>
</dbReference>
<dbReference type="HOGENOM" id="CLU_101573_0_0_1"/>
<dbReference type="InParanoid" id="Q9SR92"/>
<dbReference type="OMA" id="FTMINPD"/>
<dbReference type="PhylomeDB" id="Q9SR92"/>
<dbReference type="PRO" id="PR:Q9SR92"/>
<dbReference type="Proteomes" id="UP000006548">
    <property type="component" value="Chromosome 3"/>
</dbReference>
<dbReference type="ExpressionAtlas" id="Q9SR92">
    <property type="expression patterns" value="baseline and differential"/>
</dbReference>
<dbReference type="GO" id="GO:0009507">
    <property type="term" value="C:chloroplast"/>
    <property type="evidence" value="ECO:0007005"/>
    <property type="project" value="TAIR"/>
</dbReference>
<dbReference type="GO" id="GO:0009941">
    <property type="term" value="C:chloroplast envelope"/>
    <property type="evidence" value="ECO:0007005"/>
    <property type="project" value="TAIR"/>
</dbReference>
<dbReference type="GO" id="GO:0009534">
    <property type="term" value="C:chloroplast thylakoid"/>
    <property type="evidence" value="ECO:0007005"/>
    <property type="project" value="TAIR"/>
</dbReference>
<dbReference type="GO" id="GO:0016020">
    <property type="term" value="C:membrane"/>
    <property type="evidence" value="ECO:0007669"/>
    <property type="project" value="UniProtKB-SubCell"/>
</dbReference>
<dbReference type="GO" id="GO:0009409">
    <property type="term" value="P:response to cold"/>
    <property type="evidence" value="ECO:0000315"/>
    <property type="project" value="TAIR"/>
</dbReference>
<dbReference type="CDD" id="cd00158">
    <property type="entry name" value="RHOD"/>
    <property type="match status" value="1"/>
</dbReference>
<dbReference type="FunFam" id="3.40.250.10:FF:000047">
    <property type="entry name" value="Rhodanese-like domain-containing protein 10"/>
    <property type="match status" value="1"/>
</dbReference>
<dbReference type="Gene3D" id="3.40.250.10">
    <property type="entry name" value="Rhodanese-like domain"/>
    <property type="match status" value="1"/>
</dbReference>
<dbReference type="InterPro" id="IPR001763">
    <property type="entry name" value="Rhodanese-like_dom"/>
</dbReference>
<dbReference type="InterPro" id="IPR036873">
    <property type="entry name" value="Rhodanese-like_dom_sf"/>
</dbReference>
<dbReference type="InterPro" id="IPR044614">
    <property type="entry name" value="STR10"/>
</dbReference>
<dbReference type="PANTHER" id="PTHR45510">
    <property type="entry name" value="RHODANESE-LIKE DOMAIN-CONTAINING PROTEIN 10"/>
    <property type="match status" value="1"/>
</dbReference>
<dbReference type="PANTHER" id="PTHR45510:SF1">
    <property type="entry name" value="RHODANESE-LIKE DOMAIN-CONTAINING PROTEIN 10"/>
    <property type="match status" value="1"/>
</dbReference>
<dbReference type="Pfam" id="PF00581">
    <property type="entry name" value="Rhodanese"/>
    <property type="match status" value="1"/>
</dbReference>
<dbReference type="SMART" id="SM00450">
    <property type="entry name" value="RHOD"/>
    <property type="match status" value="1"/>
</dbReference>
<dbReference type="SUPFAM" id="SSF52821">
    <property type="entry name" value="Rhodanese/Cell cycle control phosphatase"/>
    <property type="match status" value="1"/>
</dbReference>
<dbReference type="PROSITE" id="PS50206">
    <property type="entry name" value="RHODANESE_3"/>
    <property type="match status" value="1"/>
</dbReference>
<name>STR10_ARATH</name>
<keyword id="KW-0472">Membrane</keyword>
<keyword id="KW-1185">Reference proteome</keyword>
<keyword id="KW-0812">Transmembrane</keyword>
<keyword id="KW-1133">Transmembrane helix</keyword>
<gene>
    <name type="primary">STR10</name>
    <name type="ordered locus">At3g08920</name>
    <name type="ORF">T16O11.14</name>
</gene>
<protein>
    <recommendedName>
        <fullName>Rhodanese-like domain-containing protein 10</fullName>
    </recommendedName>
    <alternativeName>
        <fullName>Sulfurtransferase 10</fullName>
        <shortName>AtStr10</shortName>
    </alternativeName>
</protein>
<sequence>MTVLLPQLNHIHKLPVVLNRRLRQSYRLPVISAVSGKELILSGKVRAVEPKEANAVVASEGYILLDVRPAWEREKARVKGSLHVPLFVEDPDNGPITLLKKWIHLGYIGLWTGQRFTMINDEFALRVVEAVPDKESKVLVVCGEGLRSLAAVSKLHGEGYKSLGWLTGGFNRVSEGDFPEIEGTEELRFATIGGVSFYLLKLLVLLPSFGQKSR</sequence>
<proteinExistence type="evidence at transcript level"/>
<evidence type="ECO:0000255" key="1"/>
<evidence type="ECO:0000255" key="2">
    <source>
        <dbReference type="PROSITE-ProRule" id="PRU00173"/>
    </source>
</evidence>
<evidence type="ECO:0000305" key="3"/>
<accession>Q9SR92</accession>
<accession>Q8LBR6</accession>
<accession>Q8RY72</accession>
<organism>
    <name type="scientific">Arabidopsis thaliana</name>
    <name type="common">Mouse-ear cress</name>
    <dbReference type="NCBI Taxonomy" id="3702"/>
    <lineage>
        <taxon>Eukaryota</taxon>
        <taxon>Viridiplantae</taxon>
        <taxon>Streptophyta</taxon>
        <taxon>Embryophyta</taxon>
        <taxon>Tracheophyta</taxon>
        <taxon>Spermatophyta</taxon>
        <taxon>Magnoliopsida</taxon>
        <taxon>eudicotyledons</taxon>
        <taxon>Gunneridae</taxon>
        <taxon>Pentapetalae</taxon>
        <taxon>rosids</taxon>
        <taxon>malvids</taxon>
        <taxon>Brassicales</taxon>
        <taxon>Brassicaceae</taxon>
        <taxon>Camelineae</taxon>
        <taxon>Arabidopsis</taxon>
    </lineage>
</organism>
<reference key="1">
    <citation type="journal article" date="2000" name="Nature">
        <title>Sequence and analysis of chromosome 3 of the plant Arabidopsis thaliana.</title>
        <authorList>
            <person name="Salanoubat M."/>
            <person name="Lemcke K."/>
            <person name="Rieger M."/>
            <person name="Ansorge W."/>
            <person name="Unseld M."/>
            <person name="Fartmann B."/>
            <person name="Valle G."/>
            <person name="Bloecker H."/>
            <person name="Perez-Alonso M."/>
            <person name="Obermaier B."/>
            <person name="Delseny M."/>
            <person name="Boutry M."/>
            <person name="Grivell L.A."/>
            <person name="Mache R."/>
            <person name="Puigdomenech P."/>
            <person name="De Simone V."/>
            <person name="Choisne N."/>
            <person name="Artiguenave F."/>
            <person name="Robert C."/>
            <person name="Brottier P."/>
            <person name="Wincker P."/>
            <person name="Cattolico L."/>
            <person name="Weissenbach J."/>
            <person name="Saurin W."/>
            <person name="Quetier F."/>
            <person name="Schaefer M."/>
            <person name="Mueller-Auer S."/>
            <person name="Gabel C."/>
            <person name="Fuchs M."/>
            <person name="Benes V."/>
            <person name="Wurmbach E."/>
            <person name="Drzonek H."/>
            <person name="Erfle H."/>
            <person name="Jordan N."/>
            <person name="Bangert S."/>
            <person name="Wiedelmann R."/>
            <person name="Kranz H."/>
            <person name="Voss H."/>
            <person name="Holland R."/>
            <person name="Brandt P."/>
            <person name="Nyakatura G."/>
            <person name="Vezzi A."/>
            <person name="D'Angelo M."/>
            <person name="Pallavicini A."/>
            <person name="Toppo S."/>
            <person name="Simionati B."/>
            <person name="Conrad A."/>
            <person name="Hornischer K."/>
            <person name="Kauer G."/>
            <person name="Loehnert T.-H."/>
            <person name="Nordsiek G."/>
            <person name="Reichelt J."/>
            <person name="Scharfe M."/>
            <person name="Schoen O."/>
            <person name="Bargues M."/>
            <person name="Terol J."/>
            <person name="Climent J."/>
            <person name="Navarro P."/>
            <person name="Collado C."/>
            <person name="Perez-Perez A."/>
            <person name="Ottenwaelder B."/>
            <person name="Duchemin D."/>
            <person name="Cooke R."/>
            <person name="Laudie M."/>
            <person name="Berger-Llauro C."/>
            <person name="Purnelle B."/>
            <person name="Masuy D."/>
            <person name="de Haan M."/>
            <person name="Maarse A.C."/>
            <person name="Alcaraz J.-P."/>
            <person name="Cottet A."/>
            <person name="Casacuberta E."/>
            <person name="Monfort A."/>
            <person name="Argiriou A."/>
            <person name="Flores M."/>
            <person name="Liguori R."/>
            <person name="Vitale D."/>
            <person name="Mannhaupt G."/>
            <person name="Haase D."/>
            <person name="Schoof H."/>
            <person name="Rudd S."/>
            <person name="Zaccaria P."/>
            <person name="Mewes H.-W."/>
            <person name="Mayer K.F.X."/>
            <person name="Kaul S."/>
            <person name="Town C.D."/>
            <person name="Koo H.L."/>
            <person name="Tallon L.J."/>
            <person name="Jenkins J."/>
            <person name="Rooney T."/>
            <person name="Rizzo M."/>
            <person name="Walts A."/>
            <person name="Utterback T."/>
            <person name="Fujii C.Y."/>
            <person name="Shea T.P."/>
            <person name="Creasy T.H."/>
            <person name="Haas B."/>
            <person name="Maiti R."/>
            <person name="Wu D."/>
            <person name="Peterson J."/>
            <person name="Van Aken S."/>
            <person name="Pai G."/>
            <person name="Militscher J."/>
            <person name="Sellers P."/>
            <person name="Gill J.E."/>
            <person name="Feldblyum T.V."/>
            <person name="Preuss D."/>
            <person name="Lin X."/>
            <person name="Nierman W.C."/>
            <person name="Salzberg S.L."/>
            <person name="White O."/>
            <person name="Venter J.C."/>
            <person name="Fraser C.M."/>
            <person name="Kaneko T."/>
            <person name="Nakamura Y."/>
            <person name="Sato S."/>
            <person name="Kato T."/>
            <person name="Asamizu E."/>
            <person name="Sasamoto S."/>
            <person name="Kimura T."/>
            <person name="Idesawa K."/>
            <person name="Kawashima K."/>
            <person name="Kishida Y."/>
            <person name="Kiyokawa C."/>
            <person name="Kohara M."/>
            <person name="Matsumoto M."/>
            <person name="Matsuno A."/>
            <person name="Muraki A."/>
            <person name="Nakayama S."/>
            <person name="Nakazaki N."/>
            <person name="Shinpo S."/>
            <person name="Takeuchi C."/>
            <person name="Wada T."/>
            <person name="Watanabe A."/>
            <person name="Yamada M."/>
            <person name="Yasuda M."/>
            <person name="Tabata S."/>
        </authorList>
    </citation>
    <scope>NUCLEOTIDE SEQUENCE [LARGE SCALE GENOMIC DNA]</scope>
    <source>
        <strain>cv. Columbia</strain>
    </source>
</reference>
<reference key="2">
    <citation type="journal article" date="2017" name="Plant J.">
        <title>Araport11: a complete reannotation of the Arabidopsis thaliana reference genome.</title>
        <authorList>
            <person name="Cheng C.Y."/>
            <person name="Krishnakumar V."/>
            <person name="Chan A.P."/>
            <person name="Thibaud-Nissen F."/>
            <person name="Schobel S."/>
            <person name="Town C.D."/>
        </authorList>
    </citation>
    <scope>GENOME REANNOTATION</scope>
    <source>
        <strain>cv. Columbia</strain>
    </source>
</reference>
<reference key="3">
    <citation type="journal article" date="2003" name="Science">
        <title>Empirical analysis of transcriptional activity in the Arabidopsis genome.</title>
        <authorList>
            <person name="Yamada K."/>
            <person name="Lim J."/>
            <person name="Dale J.M."/>
            <person name="Chen H."/>
            <person name="Shinn P."/>
            <person name="Palm C.J."/>
            <person name="Southwick A.M."/>
            <person name="Wu H.C."/>
            <person name="Kim C.J."/>
            <person name="Nguyen M."/>
            <person name="Pham P.K."/>
            <person name="Cheuk R.F."/>
            <person name="Karlin-Newmann G."/>
            <person name="Liu S.X."/>
            <person name="Lam B."/>
            <person name="Sakano H."/>
            <person name="Wu T."/>
            <person name="Yu G."/>
            <person name="Miranda M."/>
            <person name="Quach H.L."/>
            <person name="Tripp M."/>
            <person name="Chang C.H."/>
            <person name="Lee J.M."/>
            <person name="Toriumi M.J."/>
            <person name="Chan M.M."/>
            <person name="Tang C.C."/>
            <person name="Onodera C.S."/>
            <person name="Deng J.M."/>
            <person name="Akiyama K."/>
            <person name="Ansari Y."/>
            <person name="Arakawa T."/>
            <person name="Banh J."/>
            <person name="Banno F."/>
            <person name="Bowser L."/>
            <person name="Brooks S.Y."/>
            <person name="Carninci P."/>
            <person name="Chao Q."/>
            <person name="Choy N."/>
            <person name="Enju A."/>
            <person name="Goldsmith A.D."/>
            <person name="Gurjal M."/>
            <person name="Hansen N.F."/>
            <person name="Hayashizaki Y."/>
            <person name="Johnson-Hopson C."/>
            <person name="Hsuan V.W."/>
            <person name="Iida K."/>
            <person name="Karnes M."/>
            <person name="Khan S."/>
            <person name="Koesema E."/>
            <person name="Ishida J."/>
            <person name="Jiang P.X."/>
            <person name="Jones T."/>
            <person name="Kawai J."/>
            <person name="Kamiya A."/>
            <person name="Meyers C."/>
            <person name="Nakajima M."/>
            <person name="Narusaka M."/>
            <person name="Seki M."/>
            <person name="Sakurai T."/>
            <person name="Satou M."/>
            <person name="Tamse R."/>
            <person name="Vaysberg M."/>
            <person name="Wallender E.K."/>
            <person name="Wong C."/>
            <person name="Yamamura Y."/>
            <person name="Yuan S."/>
            <person name="Shinozaki K."/>
            <person name="Davis R.W."/>
            <person name="Theologis A."/>
            <person name="Ecker J.R."/>
        </authorList>
    </citation>
    <scope>NUCLEOTIDE SEQUENCE [LARGE SCALE MRNA]</scope>
    <source>
        <strain>cv. Columbia</strain>
    </source>
</reference>
<reference key="4">
    <citation type="submission" date="2002-03" db="EMBL/GenBank/DDBJ databases">
        <title>Full-length cDNA from Arabidopsis thaliana.</title>
        <authorList>
            <person name="Brover V.V."/>
            <person name="Troukhan M.E."/>
            <person name="Alexandrov N.A."/>
            <person name="Lu Y.-P."/>
            <person name="Flavell R.B."/>
            <person name="Feldmann K.A."/>
        </authorList>
    </citation>
    <scope>NUCLEOTIDE SEQUENCE [LARGE SCALE MRNA]</scope>
</reference>
<reference key="5">
    <citation type="journal article" date="2007" name="Plant Physiol. Biochem.">
        <title>Differential expression of Arabidopsis sulfurtransferases under various growth conditions.</title>
        <authorList>
            <person name="Bartels A."/>
            <person name="Mock H.P."/>
            <person name="Papenbrock J."/>
        </authorList>
    </citation>
    <scope>GENE FAMILY</scope>
    <scope>NOMENCLATURE</scope>
</reference>